<gene>
    <name evidence="1" type="primary">nuoB</name>
    <name type="ordered locus">SACE_6901</name>
</gene>
<protein>
    <recommendedName>
        <fullName evidence="1">NADH-quinone oxidoreductase subunit B</fullName>
        <ecNumber evidence="1">7.1.1.-</ecNumber>
    </recommendedName>
    <alternativeName>
        <fullName evidence="1">NADH dehydrogenase I subunit B</fullName>
    </alternativeName>
    <alternativeName>
        <fullName evidence="1">NDH-1 subunit B</fullName>
    </alternativeName>
</protein>
<feature type="chain" id="PRO_0000376353" description="NADH-quinone oxidoreductase subunit B">
    <location>
        <begin position="1"/>
        <end position="220"/>
    </location>
</feature>
<feature type="region of interest" description="Disordered" evidence="2">
    <location>
        <begin position="174"/>
        <end position="220"/>
    </location>
</feature>
<feature type="compositionally biased region" description="Basic and acidic residues" evidence="2">
    <location>
        <begin position="210"/>
        <end position="220"/>
    </location>
</feature>
<feature type="binding site" evidence="1">
    <location>
        <position position="37"/>
    </location>
    <ligand>
        <name>[4Fe-4S] cluster</name>
        <dbReference type="ChEBI" id="CHEBI:49883"/>
    </ligand>
</feature>
<feature type="binding site" evidence="1">
    <location>
        <position position="38"/>
    </location>
    <ligand>
        <name>[4Fe-4S] cluster</name>
        <dbReference type="ChEBI" id="CHEBI:49883"/>
    </ligand>
</feature>
<feature type="binding site" evidence="1">
    <location>
        <position position="103"/>
    </location>
    <ligand>
        <name>[4Fe-4S] cluster</name>
        <dbReference type="ChEBI" id="CHEBI:49883"/>
    </ligand>
</feature>
<feature type="binding site" evidence="1">
    <location>
        <position position="132"/>
    </location>
    <ligand>
        <name>[4Fe-4S] cluster</name>
        <dbReference type="ChEBI" id="CHEBI:49883"/>
    </ligand>
</feature>
<comment type="function">
    <text evidence="1">NDH-1 shuttles electrons from NADH, via FMN and iron-sulfur (Fe-S) centers, to quinones in the respiratory chain. The immediate electron acceptor for the enzyme in this species is believed to be a menaquinone. Couples the redox reaction to proton translocation (for every two electrons transferred, four hydrogen ions are translocated across the cytoplasmic membrane), and thus conserves the redox energy in a proton gradient.</text>
</comment>
<comment type="catalytic activity">
    <reaction evidence="1">
        <text>a quinone + NADH + 5 H(+)(in) = a quinol + NAD(+) + 4 H(+)(out)</text>
        <dbReference type="Rhea" id="RHEA:57888"/>
        <dbReference type="ChEBI" id="CHEBI:15378"/>
        <dbReference type="ChEBI" id="CHEBI:24646"/>
        <dbReference type="ChEBI" id="CHEBI:57540"/>
        <dbReference type="ChEBI" id="CHEBI:57945"/>
        <dbReference type="ChEBI" id="CHEBI:132124"/>
    </reaction>
</comment>
<comment type="cofactor">
    <cofactor evidence="1">
        <name>[4Fe-4S] cluster</name>
        <dbReference type="ChEBI" id="CHEBI:49883"/>
    </cofactor>
    <text evidence="1">Binds 1 [4Fe-4S] cluster.</text>
</comment>
<comment type="subunit">
    <text evidence="1">NDH-1 is composed of 14 different subunits. Subunits NuoB, C, D, E, F, and G constitute the peripheral sector of the complex.</text>
</comment>
<comment type="subcellular location">
    <subcellularLocation>
        <location evidence="1">Cell membrane</location>
        <topology evidence="1">Peripheral membrane protein</topology>
        <orientation evidence="1">Cytoplasmic side</orientation>
    </subcellularLocation>
</comment>
<comment type="similarity">
    <text evidence="1">Belongs to the complex I 20 kDa subunit family.</text>
</comment>
<dbReference type="EC" id="7.1.1.-" evidence="1"/>
<dbReference type="EMBL" id="AM420293">
    <property type="protein sequence ID" value="CAM06065.1"/>
    <property type="molecule type" value="Genomic_DNA"/>
</dbReference>
<dbReference type="RefSeq" id="WP_009944047.1">
    <property type="nucleotide sequence ID" value="NC_009142.1"/>
</dbReference>
<dbReference type="SMR" id="A4FPU0"/>
<dbReference type="STRING" id="405948.SACE_6901"/>
<dbReference type="KEGG" id="sen:SACE_6901"/>
<dbReference type="eggNOG" id="COG0377">
    <property type="taxonomic scope" value="Bacteria"/>
</dbReference>
<dbReference type="HOGENOM" id="CLU_055737_7_3_11"/>
<dbReference type="OrthoDB" id="9786737at2"/>
<dbReference type="Proteomes" id="UP000006728">
    <property type="component" value="Chromosome"/>
</dbReference>
<dbReference type="GO" id="GO:0005886">
    <property type="term" value="C:plasma membrane"/>
    <property type="evidence" value="ECO:0007669"/>
    <property type="project" value="UniProtKB-SubCell"/>
</dbReference>
<dbReference type="GO" id="GO:0045271">
    <property type="term" value="C:respiratory chain complex I"/>
    <property type="evidence" value="ECO:0007669"/>
    <property type="project" value="TreeGrafter"/>
</dbReference>
<dbReference type="GO" id="GO:0051539">
    <property type="term" value="F:4 iron, 4 sulfur cluster binding"/>
    <property type="evidence" value="ECO:0007669"/>
    <property type="project" value="UniProtKB-KW"/>
</dbReference>
<dbReference type="GO" id="GO:0005506">
    <property type="term" value="F:iron ion binding"/>
    <property type="evidence" value="ECO:0007669"/>
    <property type="project" value="UniProtKB-UniRule"/>
</dbReference>
<dbReference type="GO" id="GO:0008137">
    <property type="term" value="F:NADH dehydrogenase (ubiquinone) activity"/>
    <property type="evidence" value="ECO:0007669"/>
    <property type="project" value="InterPro"/>
</dbReference>
<dbReference type="GO" id="GO:0050136">
    <property type="term" value="F:NADH:ubiquinone reductase (non-electrogenic) activity"/>
    <property type="evidence" value="ECO:0007669"/>
    <property type="project" value="UniProtKB-UniRule"/>
</dbReference>
<dbReference type="GO" id="GO:0048038">
    <property type="term" value="F:quinone binding"/>
    <property type="evidence" value="ECO:0007669"/>
    <property type="project" value="UniProtKB-KW"/>
</dbReference>
<dbReference type="GO" id="GO:0009060">
    <property type="term" value="P:aerobic respiration"/>
    <property type="evidence" value="ECO:0007669"/>
    <property type="project" value="TreeGrafter"/>
</dbReference>
<dbReference type="GO" id="GO:0015990">
    <property type="term" value="P:electron transport coupled proton transport"/>
    <property type="evidence" value="ECO:0007669"/>
    <property type="project" value="TreeGrafter"/>
</dbReference>
<dbReference type="FunFam" id="3.40.50.12280:FF:000004">
    <property type="entry name" value="NADH-quinone oxidoreductase subunit B"/>
    <property type="match status" value="1"/>
</dbReference>
<dbReference type="Gene3D" id="3.40.50.12280">
    <property type="match status" value="1"/>
</dbReference>
<dbReference type="HAMAP" id="MF_01356">
    <property type="entry name" value="NDH1_NuoB"/>
    <property type="match status" value="1"/>
</dbReference>
<dbReference type="InterPro" id="IPR006137">
    <property type="entry name" value="NADH_UbQ_OxRdtase-like_20kDa"/>
</dbReference>
<dbReference type="InterPro" id="IPR006138">
    <property type="entry name" value="NADH_UQ_OxRdtase_20Kd_su"/>
</dbReference>
<dbReference type="NCBIfam" id="TIGR01957">
    <property type="entry name" value="nuoB_fam"/>
    <property type="match status" value="1"/>
</dbReference>
<dbReference type="NCBIfam" id="NF005012">
    <property type="entry name" value="PRK06411.1"/>
    <property type="match status" value="1"/>
</dbReference>
<dbReference type="PANTHER" id="PTHR11995">
    <property type="entry name" value="NADH DEHYDROGENASE"/>
    <property type="match status" value="1"/>
</dbReference>
<dbReference type="PANTHER" id="PTHR11995:SF14">
    <property type="entry name" value="NADH DEHYDROGENASE [UBIQUINONE] IRON-SULFUR PROTEIN 7, MITOCHONDRIAL"/>
    <property type="match status" value="1"/>
</dbReference>
<dbReference type="Pfam" id="PF01058">
    <property type="entry name" value="Oxidored_q6"/>
    <property type="match status" value="1"/>
</dbReference>
<dbReference type="SUPFAM" id="SSF56770">
    <property type="entry name" value="HydA/Nqo6-like"/>
    <property type="match status" value="1"/>
</dbReference>
<dbReference type="PROSITE" id="PS01150">
    <property type="entry name" value="COMPLEX1_20K"/>
    <property type="match status" value="1"/>
</dbReference>
<organism>
    <name type="scientific">Saccharopolyspora erythraea (strain ATCC 11635 / DSM 40517 / JCM 4748 / NBRC 13426 / NCIMB 8594 / NRRL 2338)</name>
    <dbReference type="NCBI Taxonomy" id="405948"/>
    <lineage>
        <taxon>Bacteria</taxon>
        <taxon>Bacillati</taxon>
        <taxon>Actinomycetota</taxon>
        <taxon>Actinomycetes</taxon>
        <taxon>Pseudonocardiales</taxon>
        <taxon>Pseudonocardiaceae</taxon>
        <taxon>Saccharopolyspora</taxon>
    </lineage>
</organism>
<name>NUOB_SACEN</name>
<evidence type="ECO:0000255" key="1">
    <source>
        <dbReference type="HAMAP-Rule" id="MF_01356"/>
    </source>
</evidence>
<evidence type="ECO:0000256" key="2">
    <source>
        <dbReference type="SAM" id="MobiDB-lite"/>
    </source>
</evidence>
<accession>A4FPU0</accession>
<proteinExistence type="inferred from homology"/>
<keyword id="KW-0004">4Fe-4S</keyword>
<keyword id="KW-1003">Cell membrane</keyword>
<keyword id="KW-0408">Iron</keyword>
<keyword id="KW-0411">Iron-sulfur</keyword>
<keyword id="KW-0472">Membrane</keyword>
<keyword id="KW-0479">Metal-binding</keyword>
<keyword id="KW-0520">NAD</keyword>
<keyword id="KW-0874">Quinone</keyword>
<keyword id="KW-1185">Reference proteome</keyword>
<keyword id="KW-1278">Translocase</keyword>
<keyword id="KW-0813">Transport</keyword>
<reference key="1">
    <citation type="journal article" date="2007" name="Nat. Biotechnol.">
        <title>Complete genome sequence of the erythromycin-producing bacterium Saccharopolyspora erythraea NRRL23338.</title>
        <authorList>
            <person name="Oliynyk M."/>
            <person name="Samborskyy M."/>
            <person name="Lester J.B."/>
            <person name="Mironenko T."/>
            <person name="Scott N."/>
            <person name="Dickens S."/>
            <person name="Haydock S.F."/>
            <person name="Leadlay P.F."/>
        </authorList>
    </citation>
    <scope>NUCLEOTIDE SEQUENCE [LARGE SCALE GENOMIC DNA]</scope>
    <source>
        <strain>ATCC 11635 / DSM 40517 / JCM 4748 / NBRC 13426 / NCIMB 8594 / NRRL 2338</strain>
    </source>
</reference>
<sequence length="220" mass="24350">MGLEEKLPNGILLANVEKLVNWTRKTSVWPAAFGLACCAIEMMTVGGSRYDIARFGMERFSATPRQADLMVVAGRVTNKMAPVLRQVYDQMPEPRWVIAMGVCASSGGMFNNYAVVQGVDHVVPVDMYLPGCPPRPEMLLDAILKLHAKIMDEPINAKRAALRLESGARTELVPSSERYAPKNRSQRKLAERQQAAQRREMGAEKPLGALEERAELNAGR</sequence>